<comment type="function">
    <text evidence="1">Together with its co-chaperonin GroES, plays an essential role in assisting protein folding. The GroEL-GroES system forms a nano-cage that allows encapsulation of the non-native substrate proteins and provides a physical environment optimized to promote and accelerate protein folding.</text>
</comment>
<comment type="catalytic activity">
    <reaction evidence="1">
        <text>ATP + H2O + a folded polypeptide = ADP + phosphate + an unfolded polypeptide.</text>
        <dbReference type="EC" id="5.6.1.7"/>
    </reaction>
</comment>
<comment type="subunit">
    <text evidence="1">Forms a cylinder of 14 subunits composed of two heptameric rings stacked back-to-back. Interacts with the co-chaperonin GroES.</text>
</comment>
<comment type="subcellular location">
    <subcellularLocation>
        <location evidence="1">Cytoplasm</location>
    </subcellularLocation>
</comment>
<comment type="similarity">
    <text evidence="1">Belongs to the chaperonin (HSP60) family.</text>
</comment>
<protein>
    <recommendedName>
        <fullName evidence="1">Chaperonin GroEL 1</fullName>
        <ecNumber evidence="1">5.6.1.7</ecNumber>
    </recommendedName>
    <alternativeName>
        <fullName evidence="1">60 kDa chaperonin 1</fullName>
    </alternativeName>
    <alternativeName>
        <fullName evidence="1">Chaperonin-60 1</fullName>
        <shortName evidence="1">Cpn60 1</shortName>
    </alternativeName>
</protein>
<organism>
    <name type="scientific">Prochlorococcus marinus (strain MIT 9301)</name>
    <dbReference type="NCBI Taxonomy" id="167546"/>
    <lineage>
        <taxon>Bacteria</taxon>
        <taxon>Bacillati</taxon>
        <taxon>Cyanobacteriota</taxon>
        <taxon>Cyanophyceae</taxon>
        <taxon>Synechococcales</taxon>
        <taxon>Prochlorococcaceae</taxon>
        <taxon>Prochlorococcus</taxon>
    </lineage>
</organism>
<proteinExistence type="inferred from homology"/>
<dbReference type="EC" id="5.6.1.7" evidence="1"/>
<dbReference type="EMBL" id="CP000576">
    <property type="protein sequence ID" value="ABO17099.1"/>
    <property type="molecule type" value="Genomic_DNA"/>
</dbReference>
<dbReference type="SMR" id="A3PBH4"/>
<dbReference type="STRING" id="167546.P9301_04761"/>
<dbReference type="KEGG" id="pmg:P9301_04761"/>
<dbReference type="eggNOG" id="COG0459">
    <property type="taxonomic scope" value="Bacteria"/>
</dbReference>
<dbReference type="HOGENOM" id="CLU_016503_3_0_3"/>
<dbReference type="OrthoDB" id="9766614at2"/>
<dbReference type="Proteomes" id="UP000001430">
    <property type="component" value="Chromosome"/>
</dbReference>
<dbReference type="GO" id="GO:0005737">
    <property type="term" value="C:cytoplasm"/>
    <property type="evidence" value="ECO:0007669"/>
    <property type="project" value="UniProtKB-SubCell"/>
</dbReference>
<dbReference type="GO" id="GO:0005524">
    <property type="term" value="F:ATP binding"/>
    <property type="evidence" value="ECO:0007669"/>
    <property type="project" value="UniProtKB-UniRule"/>
</dbReference>
<dbReference type="GO" id="GO:0140662">
    <property type="term" value="F:ATP-dependent protein folding chaperone"/>
    <property type="evidence" value="ECO:0007669"/>
    <property type="project" value="InterPro"/>
</dbReference>
<dbReference type="GO" id="GO:0016853">
    <property type="term" value="F:isomerase activity"/>
    <property type="evidence" value="ECO:0007669"/>
    <property type="project" value="UniProtKB-KW"/>
</dbReference>
<dbReference type="GO" id="GO:0051082">
    <property type="term" value="F:unfolded protein binding"/>
    <property type="evidence" value="ECO:0007669"/>
    <property type="project" value="UniProtKB-UniRule"/>
</dbReference>
<dbReference type="GO" id="GO:0042026">
    <property type="term" value="P:protein refolding"/>
    <property type="evidence" value="ECO:0007669"/>
    <property type="project" value="UniProtKB-UniRule"/>
</dbReference>
<dbReference type="CDD" id="cd03344">
    <property type="entry name" value="GroEL"/>
    <property type="match status" value="1"/>
</dbReference>
<dbReference type="FunFam" id="3.50.7.10:FF:000001">
    <property type="entry name" value="60 kDa chaperonin"/>
    <property type="match status" value="1"/>
</dbReference>
<dbReference type="Gene3D" id="3.50.7.10">
    <property type="entry name" value="GroEL"/>
    <property type="match status" value="1"/>
</dbReference>
<dbReference type="Gene3D" id="1.10.560.10">
    <property type="entry name" value="GroEL-like equatorial domain"/>
    <property type="match status" value="1"/>
</dbReference>
<dbReference type="Gene3D" id="3.30.260.10">
    <property type="entry name" value="TCP-1-like chaperonin intermediate domain"/>
    <property type="match status" value="1"/>
</dbReference>
<dbReference type="HAMAP" id="MF_00600">
    <property type="entry name" value="CH60"/>
    <property type="match status" value="1"/>
</dbReference>
<dbReference type="InterPro" id="IPR018370">
    <property type="entry name" value="Chaperonin_Cpn60_CS"/>
</dbReference>
<dbReference type="InterPro" id="IPR001844">
    <property type="entry name" value="Cpn60/GroEL"/>
</dbReference>
<dbReference type="InterPro" id="IPR002423">
    <property type="entry name" value="Cpn60/GroEL/TCP-1"/>
</dbReference>
<dbReference type="InterPro" id="IPR027409">
    <property type="entry name" value="GroEL-like_apical_dom_sf"/>
</dbReference>
<dbReference type="InterPro" id="IPR027413">
    <property type="entry name" value="GROEL-like_equatorial_sf"/>
</dbReference>
<dbReference type="InterPro" id="IPR027410">
    <property type="entry name" value="TCP-1-like_intermed_sf"/>
</dbReference>
<dbReference type="NCBIfam" id="TIGR02348">
    <property type="entry name" value="GroEL"/>
    <property type="match status" value="1"/>
</dbReference>
<dbReference type="NCBIfam" id="NF000592">
    <property type="entry name" value="PRK00013.1"/>
    <property type="match status" value="1"/>
</dbReference>
<dbReference type="NCBIfam" id="NF009487">
    <property type="entry name" value="PRK12849.1"/>
    <property type="match status" value="1"/>
</dbReference>
<dbReference type="NCBIfam" id="NF009488">
    <property type="entry name" value="PRK12850.1"/>
    <property type="match status" value="1"/>
</dbReference>
<dbReference type="NCBIfam" id="NF009489">
    <property type="entry name" value="PRK12851.1"/>
    <property type="match status" value="1"/>
</dbReference>
<dbReference type="PANTHER" id="PTHR45633">
    <property type="entry name" value="60 KDA HEAT SHOCK PROTEIN, MITOCHONDRIAL"/>
    <property type="match status" value="1"/>
</dbReference>
<dbReference type="Pfam" id="PF00118">
    <property type="entry name" value="Cpn60_TCP1"/>
    <property type="match status" value="1"/>
</dbReference>
<dbReference type="PRINTS" id="PR00298">
    <property type="entry name" value="CHAPERONIN60"/>
</dbReference>
<dbReference type="SUPFAM" id="SSF52029">
    <property type="entry name" value="GroEL apical domain-like"/>
    <property type="match status" value="1"/>
</dbReference>
<dbReference type="SUPFAM" id="SSF48592">
    <property type="entry name" value="GroEL equatorial domain-like"/>
    <property type="match status" value="1"/>
</dbReference>
<dbReference type="SUPFAM" id="SSF54849">
    <property type="entry name" value="GroEL-intermediate domain like"/>
    <property type="match status" value="1"/>
</dbReference>
<dbReference type="PROSITE" id="PS00296">
    <property type="entry name" value="CHAPERONINS_CPN60"/>
    <property type="match status" value="1"/>
</dbReference>
<accession>A3PBH4</accession>
<keyword id="KW-0067">ATP-binding</keyword>
<keyword id="KW-0143">Chaperone</keyword>
<keyword id="KW-0963">Cytoplasm</keyword>
<keyword id="KW-0413">Isomerase</keyword>
<keyword id="KW-0547">Nucleotide-binding</keyword>
<keyword id="KW-1185">Reference proteome</keyword>
<sequence>MAKQLSFSNESREALEKGVNFVANAVKVTIGPKAKNVVIEKKFGSPDIVRDGSTVAKEIEIENPISNLGAKLIEQVASKTKESAGDGTTTATILTQKMVQEGLKNIASGANPMELKKGMEAGLSFVLEKLSSKSISLSGSDIQKVATVSAGGDEEIGSIISKAMDIVTSDGVITVEESQSLETELDITEGMSFDRGYSSPYFVTDQERQVCELENPKILITDQKISTLVDLVPILEEIQKSGSPFLILAEDIEGEALTTLVLNKNSGVLNVASVRAPLFGERRKAALEDIAILTGAKLISEDKSMTLDKVSINDLGKAKKITITKDKTTIVAFEDTKDLVKGRVEKLKREVNITESEYDQDKINERIAKLAGGVALIKVGAATETEMKYKKLRIEDSLNATKAAIEEGVVSGGGQTLIEISDDLLNLSKTSTDDLRTGINIVKEALLEPTKQIAKNAGFNGDVVVAEIKRLNKGFNANSGKYEDLKDSGILDPTKVIRLALQDSVSIAAMLLTTEVAMADIPEPEAAGPGGPGADPMGGMGGMGMPGMGGMGMPGMGGMGMPGMGGMGMPGMGGMGMPGMM</sequence>
<reference key="1">
    <citation type="journal article" date="2007" name="PLoS Genet.">
        <title>Patterns and implications of gene gain and loss in the evolution of Prochlorococcus.</title>
        <authorList>
            <person name="Kettler G.C."/>
            <person name="Martiny A.C."/>
            <person name="Huang K."/>
            <person name="Zucker J."/>
            <person name="Coleman M.L."/>
            <person name="Rodrigue S."/>
            <person name="Chen F."/>
            <person name="Lapidus A."/>
            <person name="Ferriera S."/>
            <person name="Johnson J."/>
            <person name="Steglich C."/>
            <person name="Church G.M."/>
            <person name="Richardson P."/>
            <person name="Chisholm S.W."/>
        </authorList>
    </citation>
    <scope>NUCLEOTIDE SEQUENCE [LARGE SCALE GENOMIC DNA]</scope>
    <source>
        <strain>MIT 9301</strain>
    </source>
</reference>
<feature type="chain" id="PRO_0000332042" description="Chaperonin GroEL 1">
    <location>
        <begin position="1"/>
        <end position="581"/>
    </location>
</feature>
<feature type="region of interest" description="Disordered" evidence="2">
    <location>
        <begin position="522"/>
        <end position="541"/>
    </location>
</feature>
<feature type="compositionally biased region" description="Gly residues" evidence="2">
    <location>
        <begin position="528"/>
        <end position="541"/>
    </location>
</feature>
<feature type="binding site" evidence="1">
    <location>
        <begin position="29"/>
        <end position="32"/>
    </location>
    <ligand>
        <name>ATP</name>
        <dbReference type="ChEBI" id="CHEBI:30616"/>
    </ligand>
</feature>
<feature type="binding site" evidence="1">
    <location>
        <begin position="86"/>
        <end position="90"/>
    </location>
    <ligand>
        <name>ATP</name>
        <dbReference type="ChEBI" id="CHEBI:30616"/>
    </ligand>
</feature>
<feature type="binding site" evidence="1">
    <location>
        <position position="413"/>
    </location>
    <ligand>
        <name>ATP</name>
        <dbReference type="ChEBI" id="CHEBI:30616"/>
    </ligand>
</feature>
<feature type="binding site" evidence="1">
    <location>
        <position position="492"/>
    </location>
    <ligand>
        <name>ATP</name>
        <dbReference type="ChEBI" id="CHEBI:30616"/>
    </ligand>
</feature>
<evidence type="ECO:0000255" key="1">
    <source>
        <dbReference type="HAMAP-Rule" id="MF_00600"/>
    </source>
</evidence>
<evidence type="ECO:0000256" key="2">
    <source>
        <dbReference type="SAM" id="MobiDB-lite"/>
    </source>
</evidence>
<gene>
    <name evidence="1" type="primary">groEL1</name>
    <name evidence="1" type="synonym">groL1</name>
    <name type="ordered locus">P9301_04761</name>
</gene>
<name>CH601_PROM0</name>